<accession>C6DUY7</accession>
<gene>
    <name evidence="1" type="primary">mshB</name>
    <name type="ordered locus">TBMG_02811</name>
</gene>
<protein>
    <recommendedName>
        <fullName evidence="1">1D-myo-inositol 2-acetamido-2-deoxy-alpha-D-glucopyranoside deacetylase</fullName>
        <shortName evidence="1">GlcNAc-Ins deacetylase</shortName>
        <ecNumber evidence="1">3.5.1.103</ecNumber>
    </recommendedName>
    <alternativeName>
        <fullName>N-acetyl-1-D-myo-inositol 2-amino-2-deoxy-alpha-D-glucopyranoside deacetylase</fullName>
    </alternativeName>
</protein>
<name>MSHB_MYCTK</name>
<reference key="1">
    <citation type="submission" date="2009-07" db="EMBL/GenBank/DDBJ databases">
        <title>The genome sequence of Mycobacterium tuberculosis strain KZN 1435.</title>
        <authorList>
            <person name="Murray M."/>
            <person name="Pillay M."/>
            <person name="Borowsky M.L."/>
            <person name="Young S.K."/>
            <person name="Zeng Q."/>
            <person name="Koehrsen M."/>
            <person name="Alvarado L."/>
            <person name="Berlin A.M."/>
            <person name="Borenstein D."/>
            <person name="Chen Z."/>
            <person name="Engels R."/>
            <person name="Freedman E."/>
            <person name="Gellesch M."/>
            <person name="Goldberg J."/>
            <person name="Griggs A."/>
            <person name="Gujja S."/>
            <person name="Heiman D.I."/>
            <person name="Hepburn T.A."/>
            <person name="Howarth C."/>
            <person name="Jen D."/>
            <person name="Larson L."/>
            <person name="Lewis B."/>
            <person name="Mehta T."/>
            <person name="Park D."/>
            <person name="Pearson M."/>
            <person name="Roberts A."/>
            <person name="Saif S."/>
            <person name="Shea T.D."/>
            <person name="Shenoy N."/>
            <person name="Sisk P."/>
            <person name="Stolte C."/>
            <person name="Sykes S.N."/>
            <person name="Walk T."/>
            <person name="White J."/>
            <person name="Yandava C."/>
            <person name="Haas B."/>
            <person name="Nusbaum C."/>
            <person name="Galagan J."/>
            <person name="Birren B."/>
        </authorList>
    </citation>
    <scope>NUCLEOTIDE SEQUENCE [LARGE SCALE GENOMIC DNA]</scope>
    <source>
        <strain>KZN 1435 / MDR</strain>
    </source>
</reference>
<sequence>MSETPRLLFVHAHPDDESLSNGATIAHYTSRGAQVHVVTCTLGEEGEVIGDRWAQLTADHADQLGGYRIGELTAALRALGVSAPIYLGGAGRWRDSGMAGTDQRSQRRFVDADPRQTVGALVAIIRELRPHVVVTYDPNGGYGHPDHVHTHTVTTAAVAAAGVGSGTADHPGDPWTVPKFYWTVLGLSALISGARALVPDDLRPEWVLPRADEIAFGYSDDGIDAVVEADEQARAAKVAALAAHATQVVVGPTGRAAALSNNLALPILADEHYVLAGGSAGARDERGWETDLLAGLGFTASGT</sequence>
<organism>
    <name type="scientific">Mycobacterium tuberculosis (strain KZN 1435 / MDR)</name>
    <dbReference type="NCBI Taxonomy" id="478434"/>
    <lineage>
        <taxon>Bacteria</taxon>
        <taxon>Bacillati</taxon>
        <taxon>Actinomycetota</taxon>
        <taxon>Actinomycetes</taxon>
        <taxon>Mycobacteriales</taxon>
        <taxon>Mycobacteriaceae</taxon>
        <taxon>Mycobacterium</taxon>
        <taxon>Mycobacterium tuberculosis complex</taxon>
    </lineage>
</organism>
<evidence type="ECO:0000255" key="1">
    <source>
        <dbReference type="HAMAP-Rule" id="MF_01696"/>
    </source>
</evidence>
<keyword id="KW-0378">Hydrolase</keyword>
<keyword id="KW-0479">Metal-binding</keyword>
<keyword id="KW-0862">Zinc</keyword>
<comment type="function">
    <text evidence="1">Catalyzes the deacetylation of 1D-myo-inositol 2-acetamido-2-deoxy-alpha-D-glucopyranoside (GlcNAc-Ins) in the mycothiol biosynthesis pathway.</text>
</comment>
<comment type="catalytic activity">
    <reaction evidence="1">
        <text>1D-myo-inositol 2-acetamido-2-deoxy-alpha-D-glucopyranoside + H2O = 1D-myo-inositol 2-amino-2-deoxy-alpha-D-glucopyranoside + acetate</text>
        <dbReference type="Rhea" id="RHEA:26180"/>
        <dbReference type="ChEBI" id="CHEBI:15377"/>
        <dbReference type="ChEBI" id="CHEBI:30089"/>
        <dbReference type="ChEBI" id="CHEBI:52442"/>
        <dbReference type="ChEBI" id="CHEBI:58886"/>
        <dbReference type="EC" id="3.5.1.103"/>
    </reaction>
</comment>
<comment type="cofactor">
    <cofactor evidence="1">
        <name>Zn(2+)</name>
        <dbReference type="ChEBI" id="CHEBI:29105"/>
    </cofactor>
    <text evidence="1">Binds 1 zinc ion per subunit.</text>
</comment>
<comment type="similarity">
    <text evidence="1">Belongs to the MshB deacetylase family.</text>
</comment>
<dbReference type="EC" id="3.5.1.103" evidence="1"/>
<dbReference type="EMBL" id="CP001658">
    <property type="protein sequence ID" value="ACT25892.1"/>
    <property type="molecule type" value="Genomic_DNA"/>
</dbReference>
<dbReference type="RefSeq" id="WP_003406154.1">
    <property type="nucleotide sequence ID" value="NZ_KK341220.1"/>
</dbReference>
<dbReference type="SMR" id="C6DUY7"/>
<dbReference type="GeneID" id="45425142"/>
<dbReference type="KEGG" id="mtb:TBMG_02811"/>
<dbReference type="PATRIC" id="fig|478434.13.peg.1221"/>
<dbReference type="HOGENOM" id="CLU_049311_2_1_11"/>
<dbReference type="GO" id="GO:0035595">
    <property type="term" value="F:N-acetylglucosaminylinositol deacetylase activity"/>
    <property type="evidence" value="ECO:0007669"/>
    <property type="project" value="UniProtKB-EC"/>
</dbReference>
<dbReference type="GO" id="GO:0008270">
    <property type="term" value="F:zinc ion binding"/>
    <property type="evidence" value="ECO:0007669"/>
    <property type="project" value="UniProtKB-UniRule"/>
</dbReference>
<dbReference type="GO" id="GO:0010125">
    <property type="term" value="P:mycothiol biosynthetic process"/>
    <property type="evidence" value="ECO:0007669"/>
    <property type="project" value="UniProtKB-UniRule"/>
</dbReference>
<dbReference type="Gene3D" id="3.40.50.10320">
    <property type="entry name" value="LmbE-like"/>
    <property type="match status" value="1"/>
</dbReference>
<dbReference type="HAMAP" id="MF_01696">
    <property type="entry name" value="MshB"/>
    <property type="match status" value="1"/>
</dbReference>
<dbReference type="InterPro" id="IPR003737">
    <property type="entry name" value="GlcNAc_PI_deacetylase-related"/>
</dbReference>
<dbReference type="InterPro" id="IPR024078">
    <property type="entry name" value="LmbE-like_dom_sf"/>
</dbReference>
<dbReference type="InterPro" id="IPR017810">
    <property type="entry name" value="Mycothiol_biosynthesis_MshB"/>
</dbReference>
<dbReference type="NCBIfam" id="TIGR03445">
    <property type="entry name" value="mycothiol_MshB"/>
    <property type="match status" value="1"/>
</dbReference>
<dbReference type="PANTHER" id="PTHR12993:SF26">
    <property type="entry name" value="1D-MYO-INOSITOL 2-ACETAMIDO-2-DEOXY-ALPHA-D-GLUCOPYRANOSIDE DEACETYLASE"/>
    <property type="match status" value="1"/>
</dbReference>
<dbReference type="PANTHER" id="PTHR12993">
    <property type="entry name" value="N-ACETYLGLUCOSAMINYL-PHOSPHATIDYLINOSITOL DE-N-ACETYLASE-RELATED"/>
    <property type="match status" value="1"/>
</dbReference>
<dbReference type="Pfam" id="PF02585">
    <property type="entry name" value="PIG-L"/>
    <property type="match status" value="1"/>
</dbReference>
<dbReference type="SUPFAM" id="SSF102588">
    <property type="entry name" value="LmbE-like"/>
    <property type="match status" value="1"/>
</dbReference>
<feature type="chain" id="PRO_0000400207" description="1D-myo-inositol 2-acetamido-2-deoxy-alpha-D-glucopyranoside deacetylase">
    <location>
        <begin position="1"/>
        <end position="303"/>
    </location>
</feature>
<feature type="binding site" evidence="1">
    <location>
        <position position="13"/>
    </location>
    <ligand>
        <name>Zn(2+)</name>
        <dbReference type="ChEBI" id="CHEBI:29105"/>
    </ligand>
</feature>
<feature type="binding site" evidence="1">
    <location>
        <position position="16"/>
    </location>
    <ligand>
        <name>Zn(2+)</name>
        <dbReference type="ChEBI" id="CHEBI:29105"/>
    </ligand>
</feature>
<feature type="binding site" evidence="1">
    <location>
        <position position="147"/>
    </location>
    <ligand>
        <name>Zn(2+)</name>
        <dbReference type="ChEBI" id="CHEBI:29105"/>
    </ligand>
</feature>
<proteinExistence type="inferred from homology"/>